<protein>
    <recommendedName>
        <fullName evidence="1">Putative pyruvate, phosphate dikinase regulatory protein</fullName>
        <shortName evidence="1">PPDK regulatory protein</shortName>
        <ecNumber evidence="1">2.7.11.32</ecNumber>
        <ecNumber evidence="1">2.7.4.27</ecNumber>
    </recommendedName>
</protein>
<organism>
    <name type="scientific">Rhizobium etli (strain ATCC 51251 / DSM 11541 / JCM 21823 / NBRC 15573 / CFN 42)</name>
    <dbReference type="NCBI Taxonomy" id="347834"/>
    <lineage>
        <taxon>Bacteria</taxon>
        <taxon>Pseudomonadati</taxon>
        <taxon>Pseudomonadota</taxon>
        <taxon>Alphaproteobacteria</taxon>
        <taxon>Hyphomicrobiales</taxon>
        <taxon>Rhizobiaceae</taxon>
        <taxon>Rhizobium/Agrobacterium group</taxon>
        <taxon>Rhizobium</taxon>
    </lineage>
</organism>
<sequence length="273" mass="30380">MENRTNFFHLHLISDSTGETLISAGRAASAQFRSAQPIEHVYPLIRNRKQLLPVLQAIDDAPGIVLYTIVDRELANLIDERCVEMGVASVNVLEPVMNAFQIYLGAPSRRRVGAQHVMNAGYFARIEALNFTMDHDDGQMPDDYNDADVVIIGISRTSKTPTSIYLANRGIKTANIPIVYGVPLPESLLAATKPLIVCLIATTDRISQVRENRVLGTTQGFDREHYTDRATISEELKYARSLCARHGWPLIDVTRRSIEETAAAIVALRPKLR</sequence>
<gene>
    <name type="ordered locus">RHE_CH00001</name>
</gene>
<name>PDRP_RHIEC</name>
<accession>Q2KEA1</accession>
<proteinExistence type="inferred from homology"/>
<keyword id="KW-0418">Kinase</keyword>
<keyword id="KW-0547">Nucleotide-binding</keyword>
<keyword id="KW-1185">Reference proteome</keyword>
<keyword id="KW-0723">Serine/threonine-protein kinase</keyword>
<keyword id="KW-0808">Transferase</keyword>
<feature type="chain" id="PRO_0000316722" description="Putative pyruvate, phosphate dikinase regulatory protein">
    <location>
        <begin position="1"/>
        <end position="273"/>
    </location>
</feature>
<feature type="binding site" evidence="1">
    <location>
        <begin position="153"/>
        <end position="160"/>
    </location>
    <ligand>
        <name>ADP</name>
        <dbReference type="ChEBI" id="CHEBI:456216"/>
    </ligand>
</feature>
<reference key="1">
    <citation type="journal article" date="2006" name="Proc. Natl. Acad. Sci. U.S.A.">
        <title>The partitioned Rhizobium etli genome: genetic and metabolic redundancy in seven interacting replicons.</title>
        <authorList>
            <person name="Gonzalez V."/>
            <person name="Santamaria R.I."/>
            <person name="Bustos P."/>
            <person name="Hernandez-Gonzalez I."/>
            <person name="Medrano-Soto A."/>
            <person name="Moreno-Hagelsieb G."/>
            <person name="Janga S.C."/>
            <person name="Ramirez M.A."/>
            <person name="Jimenez-Jacinto V."/>
            <person name="Collado-Vides J."/>
            <person name="Davila G."/>
        </authorList>
    </citation>
    <scope>NUCLEOTIDE SEQUENCE [LARGE SCALE GENOMIC DNA]</scope>
    <source>
        <strain>ATCC 51251 / DSM 11541 / JCM 21823 / NBRC 15573 / CFN 42</strain>
    </source>
</reference>
<dbReference type="EC" id="2.7.11.32" evidence="1"/>
<dbReference type="EC" id="2.7.4.27" evidence="1"/>
<dbReference type="EMBL" id="CP000133">
    <property type="protein sequence ID" value="ABC88835.1"/>
    <property type="molecule type" value="Genomic_DNA"/>
</dbReference>
<dbReference type="RefSeq" id="WP_011423407.1">
    <property type="nucleotide sequence ID" value="NC_007761.1"/>
</dbReference>
<dbReference type="SMR" id="Q2KEA1"/>
<dbReference type="KEGG" id="ret:RHE_CH00001"/>
<dbReference type="eggNOG" id="COG1806">
    <property type="taxonomic scope" value="Bacteria"/>
</dbReference>
<dbReference type="HOGENOM" id="CLU_046206_2_0_5"/>
<dbReference type="OrthoDB" id="9782201at2"/>
<dbReference type="Proteomes" id="UP000001936">
    <property type="component" value="Chromosome"/>
</dbReference>
<dbReference type="GO" id="GO:0043531">
    <property type="term" value="F:ADP binding"/>
    <property type="evidence" value="ECO:0007669"/>
    <property type="project" value="UniProtKB-UniRule"/>
</dbReference>
<dbReference type="GO" id="GO:0005524">
    <property type="term" value="F:ATP binding"/>
    <property type="evidence" value="ECO:0007669"/>
    <property type="project" value="InterPro"/>
</dbReference>
<dbReference type="GO" id="GO:0016776">
    <property type="term" value="F:phosphotransferase activity, phosphate group as acceptor"/>
    <property type="evidence" value="ECO:0007669"/>
    <property type="project" value="UniProtKB-UniRule"/>
</dbReference>
<dbReference type="GO" id="GO:0004674">
    <property type="term" value="F:protein serine/threonine kinase activity"/>
    <property type="evidence" value="ECO:0007669"/>
    <property type="project" value="UniProtKB-UniRule"/>
</dbReference>
<dbReference type="HAMAP" id="MF_00921">
    <property type="entry name" value="PDRP"/>
    <property type="match status" value="1"/>
</dbReference>
<dbReference type="InterPro" id="IPR005177">
    <property type="entry name" value="Kinase-pyrophosphorylase"/>
</dbReference>
<dbReference type="InterPro" id="IPR026565">
    <property type="entry name" value="PPDK_reg"/>
</dbReference>
<dbReference type="NCBIfam" id="NF003742">
    <property type="entry name" value="PRK05339.1"/>
    <property type="match status" value="1"/>
</dbReference>
<dbReference type="PANTHER" id="PTHR31756">
    <property type="entry name" value="PYRUVATE, PHOSPHATE DIKINASE REGULATORY PROTEIN 1, CHLOROPLASTIC"/>
    <property type="match status" value="1"/>
</dbReference>
<dbReference type="PANTHER" id="PTHR31756:SF3">
    <property type="entry name" value="PYRUVATE, PHOSPHATE DIKINASE REGULATORY PROTEIN 1, CHLOROPLASTIC"/>
    <property type="match status" value="1"/>
</dbReference>
<dbReference type="Pfam" id="PF03618">
    <property type="entry name" value="Kinase-PPPase"/>
    <property type="match status" value="1"/>
</dbReference>
<comment type="function">
    <text evidence="1">Bifunctional serine/threonine kinase and phosphorylase involved in the regulation of the pyruvate, phosphate dikinase (PPDK) by catalyzing its phosphorylation/dephosphorylation.</text>
</comment>
<comment type="catalytic activity">
    <reaction evidence="1">
        <text>N(tele)-phospho-L-histidyl/L-threonyl-[pyruvate, phosphate dikinase] + ADP = N(tele)-phospho-L-histidyl/O-phospho-L-threonyl-[pyruvate, phosphate dikinase] + AMP + H(+)</text>
        <dbReference type="Rhea" id="RHEA:43692"/>
        <dbReference type="Rhea" id="RHEA-COMP:10650"/>
        <dbReference type="Rhea" id="RHEA-COMP:10651"/>
        <dbReference type="ChEBI" id="CHEBI:15378"/>
        <dbReference type="ChEBI" id="CHEBI:30013"/>
        <dbReference type="ChEBI" id="CHEBI:61977"/>
        <dbReference type="ChEBI" id="CHEBI:83586"/>
        <dbReference type="ChEBI" id="CHEBI:456215"/>
        <dbReference type="ChEBI" id="CHEBI:456216"/>
        <dbReference type="EC" id="2.7.11.32"/>
    </reaction>
</comment>
<comment type="catalytic activity">
    <reaction evidence="1">
        <text>N(tele)-phospho-L-histidyl/O-phospho-L-threonyl-[pyruvate, phosphate dikinase] + phosphate + H(+) = N(tele)-phospho-L-histidyl/L-threonyl-[pyruvate, phosphate dikinase] + diphosphate</text>
        <dbReference type="Rhea" id="RHEA:43696"/>
        <dbReference type="Rhea" id="RHEA-COMP:10650"/>
        <dbReference type="Rhea" id="RHEA-COMP:10651"/>
        <dbReference type="ChEBI" id="CHEBI:15378"/>
        <dbReference type="ChEBI" id="CHEBI:30013"/>
        <dbReference type="ChEBI" id="CHEBI:33019"/>
        <dbReference type="ChEBI" id="CHEBI:43474"/>
        <dbReference type="ChEBI" id="CHEBI:61977"/>
        <dbReference type="ChEBI" id="CHEBI:83586"/>
        <dbReference type="EC" id="2.7.4.27"/>
    </reaction>
</comment>
<comment type="similarity">
    <text evidence="1">Belongs to the pyruvate, phosphate/water dikinase regulatory protein family. PDRP subfamily.</text>
</comment>
<evidence type="ECO:0000255" key="1">
    <source>
        <dbReference type="HAMAP-Rule" id="MF_00921"/>
    </source>
</evidence>